<reference key="1">
    <citation type="journal article" date="2016" name="Front. Microbiol.">
        <title>The complete genome sequence of hyperthermophile Dictyoglomus turgidum DSM 6724 reveals a specialized carbohydrate fermentor.</title>
        <authorList>
            <person name="Brumm P.J."/>
            <person name="Gowda K."/>
            <person name="Robb F.T."/>
            <person name="Mead D.A."/>
        </authorList>
    </citation>
    <scope>NUCLEOTIDE SEQUENCE [LARGE SCALE GENOMIC DNA]</scope>
    <source>
        <strain>DSM 6724 / Z-1310</strain>
    </source>
</reference>
<gene>
    <name evidence="1" type="primary">rplF</name>
    <name type="ordered locus">Dtur_0996</name>
</gene>
<accession>B8E1E8</accession>
<keyword id="KW-1185">Reference proteome</keyword>
<keyword id="KW-0687">Ribonucleoprotein</keyword>
<keyword id="KW-0689">Ribosomal protein</keyword>
<keyword id="KW-0694">RNA-binding</keyword>
<keyword id="KW-0699">rRNA-binding</keyword>
<name>RL6_DICTD</name>
<evidence type="ECO:0000255" key="1">
    <source>
        <dbReference type="HAMAP-Rule" id="MF_01365"/>
    </source>
</evidence>
<evidence type="ECO:0000305" key="2"/>
<proteinExistence type="inferred from homology"/>
<feature type="chain" id="PRO_1000143980" description="Large ribosomal subunit protein uL6">
    <location>
        <begin position="1"/>
        <end position="180"/>
    </location>
</feature>
<protein>
    <recommendedName>
        <fullName evidence="1">Large ribosomal subunit protein uL6</fullName>
    </recommendedName>
    <alternativeName>
        <fullName evidence="2">50S ribosomal protein L6</fullName>
    </alternativeName>
</protein>
<sequence>MSRIGRKPVPIPQNVQVEIKDGNCVSVKGPLGQIEKTFSPLLTIKKVDNQIVVERPNDEKFVKALHGLTRALINNMVLGVTQGFEKRLELQGTGYRARVQGNKLVLEVGFSHPVELEIPTGLTVSVQDNTKISVKGIDKELVGQFAAIVRSVRPAEPYKGKGIRYEGEKIRQKAGKAGKK</sequence>
<dbReference type="EMBL" id="CP001251">
    <property type="protein sequence ID" value="ACK42276.1"/>
    <property type="molecule type" value="Genomic_DNA"/>
</dbReference>
<dbReference type="RefSeq" id="WP_012583360.1">
    <property type="nucleotide sequence ID" value="NC_011661.1"/>
</dbReference>
<dbReference type="RefSeq" id="YP_002352890.1">
    <property type="nucleotide sequence ID" value="NC_011661.1"/>
</dbReference>
<dbReference type="SMR" id="B8E1E8"/>
<dbReference type="FunCoup" id="B8E1E8">
    <property type="interactions" value="401"/>
</dbReference>
<dbReference type="STRING" id="515635.Dtur_0996"/>
<dbReference type="EnsemblBacteria" id="ACK42276">
    <property type="protein sequence ID" value="ACK42276"/>
    <property type="gene ID" value="Dtur_0996"/>
</dbReference>
<dbReference type="KEGG" id="dtu:Dtur_0996"/>
<dbReference type="PATRIC" id="fig|515635.4.peg.1033"/>
<dbReference type="eggNOG" id="COG0097">
    <property type="taxonomic scope" value="Bacteria"/>
</dbReference>
<dbReference type="HOGENOM" id="CLU_065464_1_2_0"/>
<dbReference type="InParanoid" id="B8E1E8"/>
<dbReference type="OrthoDB" id="9805007at2"/>
<dbReference type="Proteomes" id="UP000007719">
    <property type="component" value="Chromosome"/>
</dbReference>
<dbReference type="GO" id="GO:0022625">
    <property type="term" value="C:cytosolic large ribosomal subunit"/>
    <property type="evidence" value="ECO:0000318"/>
    <property type="project" value="GO_Central"/>
</dbReference>
<dbReference type="GO" id="GO:0019843">
    <property type="term" value="F:rRNA binding"/>
    <property type="evidence" value="ECO:0007669"/>
    <property type="project" value="UniProtKB-UniRule"/>
</dbReference>
<dbReference type="GO" id="GO:0003735">
    <property type="term" value="F:structural constituent of ribosome"/>
    <property type="evidence" value="ECO:0000318"/>
    <property type="project" value="GO_Central"/>
</dbReference>
<dbReference type="GO" id="GO:0002181">
    <property type="term" value="P:cytoplasmic translation"/>
    <property type="evidence" value="ECO:0000318"/>
    <property type="project" value="GO_Central"/>
</dbReference>
<dbReference type="FunFam" id="3.90.930.12:FF:000001">
    <property type="entry name" value="50S ribosomal protein L6"/>
    <property type="match status" value="1"/>
</dbReference>
<dbReference type="FunFam" id="3.90.930.12:FF:000002">
    <property type="entry name" value="50S ribosomal protein L6"/>
    <property type="match status" value="1"/>
</dbReference>
<dbReference type="Gene3D" id="3.90.930.12">
    <property type="entry name" value="Ribosomal protein L6, alpha-beta domain"/>
    <property type="match status" value="2"/>
</dbReference>
<dbReference type="HAMAP" id="MF_01365_B">
    <property type="entry name" value="Ribosomal_uL6_B"/>
    <property type="match status" value="1"/>
</dbReference>
<dbReference type="InterPro" id="IPR000702">
    <property type="entry name" value="Ribosomal_uL6-like"/>
</dbReference>
<dbReference type="InterPro" id="IPR036789">
    <property type="entry name" value="Ribosomal_uL6-like_a/b-dom_sf"/>
</dbReference>
<dbReference type="InterPro" id="IPR020040">
    <property type="entry name" value="Ribosomal_uL6_a/b-dom"/>
</dbReference>
<dbReference type="InterPro" id="IPR019906">
    <property type="entry name" value="Ribosomal_uL6_bac-type"/>
</dbReference>
<dbReference type="NCBIfam" id="TIGR03654">
    <property type="entry name" value="L6_bact"/>
    <property type="match status" value="1"/>
</dbReference>
<dbReference type="PANTHER" id="PTHR11655">
    <property type="entry name" value="60S/50S RIBOSOMAL PROTEIN L6/L9"/>
    <property type="match status" value="1"/>
</dbReference>
<dbReference type="PANTHER" id="PTHR11655:SF14">
    <property type="entry name" value="LARGE RIBOSOMAL SUBUNIT PROTEIN UL6M"/>
    <property type="match status" value="1"/>
</dbReference>
<dbReference type="Pfam" id="PF00347">
    <property type="entry name" value="Ribosomal_L6"/>
    <property type="match status" value="2"/>
</dbReference>
<dbReference type="PIRSF" id="PIRSF002162">
    <property type="entry name" value="Ribosomal_L6"/>
    <property type="match status" value="1"/>
</dbReference>
<dbReference type="PRINTS" id="PR00059">
    <property type="entry name" value="RIBOSOMALL6"/>
</dbReference>
<dbReference type="SUPFAM" id="SSF56053">
    <property type="entry name" value="Ribosomal protein L6"/>
    <property type="match status" value="2"/>
</dbReference>
<comment type="function">
    <text evidence="1">This protein binds to the 23S rRNA, and is important in its secondary structure. It is located near the subunit interface in the base of the L7/L12 stalk, and near the tRNA binding site of the peptidyltransferase center.</text>
</comment>
<comment type="subunit">
    <text evidence="1">Part of the 50S ribosomal subunit.</text>
</comment>
<comment type="similarity">
    <text evidence="1">Belongs to the universal ribosomal protein uL6 family.</text>
</comment>
<organism>
    <name type="scientific">Dictyoglomus turgidum (strain DSM 6724 / Z-1310)</name>
    <dbReference type="NCBI Taxonomy" id="515635"/>
    <lineage>
        <taxon>Bacteria</taxon>
        <taxon>Pseudomonadati</taxon>
        <taxon>Dictyoglomota</taxon>
        <taxon>Dictyoglomia</taxon>
        <taxon>Dictyoglomales</taxon>
        <taxon>Dictyoglomaceae</taxon>
        <taxon>Dictyoglomus</taxon>
    </lineage>
</organism>